<accession>Q8RD30</accession>
<sequence length="396" mass="43805">MDRLLRIYNKEERLVVGLMSGTSADGIDAALVKVKGRGLDTKVELLEFEKFPYEEEVQKKIFELFDPHTGTVEKICHMNFLLGELFAEATLKLIKKAGLTPKDIDLIGSHGQTIYHIPNFIEDMGYKVRSTLQIGEPAVIAERTGIVTVADFRVRDVAAGGQGAPLVPYTEYILYRSPNETIALQNIGGIGNVTVLPKGGSIEDVIAFDTGPGNMVIDEVVKRITHGKMNFDKDGELASRGKVNEEFLAELLKDEFFKMKPPKTTGREHFGKNYVDNLMKKASYLEIDKYDLVATVTALTAYSVVRSYEKFIFPYYKVDKVVIGGGGSFNKTLVQMIKKQLPQVRVITQEDIGFNSDAKEAVAFAILASETINGNFNNIPKATGAKHPVVMGKISL</sequence>
<protein>
    <recommendedName>
        <fullName evidence="1">Anhydro-N-acetylmuramic acid kinase</fullName>
        <ecNumber evidence="1">2.7.1.170</ecNumber>
    </recommendedName>
    <alternativeName>
        <fullName evidence="1">AnhMurNAc kinase</fullName>
    </alternativeName>
</protein>
<feature type="chain" id="PRO_0000250074" description="Anhydro-N-acetylmuramic acid kinase">
    <location>
        <begin position="1"/>
        <end position="396"/>
    </location>
</feature>
<feature type="binding site" evidence="1">
    <location>
        <begin position="21"/>
        <end position="28"/>
    </location>
    <ligand>
        <name>ATP</name>
        <dbReference type="ChEBI" id="CHEBI:30616"/>
    </ligand>
</feature>
<gene>
    <name evidence="1" type="primary">anmK</name>
    <name type="ordered locus">TTE0217</name>
</gene>
<keyword id="KW-0067">ATP-binding</keyword>
<keyword id="KW-0119">Carbohydrate metabolism</keyword>
<keyword id="KW-0418">Kinase</keyword>
<keyword id="KW-0547">Nucleotide-binding</keyword>
<keyword id="KW-1185">Reference proteome</keyword>
<keyword id="KW-0808">Transferase</keyword>
<organism>
    <name type="scientific">Caldanaerobacter subterraneus subsp. tengcongensis (strain DSM 15242 / JCM 11007 / NBRC 100824 / MB4)</name>
    <name type="common">Thermoanaerobacter tengcongensis</name>
    <dbReference type="NCBI Taxonomy" id="273068"/>
    <lineage>
        <taxon>Bacteria</taxon>
        <taxon>Bacillati</taxon>
        <taxon>Bacillota</taxon>
        <taxon>Clostridia</taxon>
        <taxon>Thermoanaerobacterales</taxon>
        <taxon>Thermoanaerobacteraceae</taxon>
        <taxon>Caldanaerobacter</taxon>
    </lineage>
</organism>
<dbReference type="EC" id="2.7.1.170" evidence="1"/>
<dbReference type="EMBL" id="AE008691">
    <property type="protein sequence ID" value="AAM23518.1"/>
    <property type="molecule type" value="Genomic_DNA"/>
</dbReference>
<dbReference type="RefSeq" id="WP_011024707.1">
    <property type="nucleotide sequence ID" value="NC_003869.1"/>
</dbReference>
<dbReference type="SMR" id="Q8RD30"/>
<dbReference type="STRING" id="273068.TTE0217"/>
<dbReference type="KEGG" id="tte:TTE0217"/>
<dbReference type="eggNOG" id="COG2377">
    <property type="taxonomic scope" value="Bacteria"/>
</dbReference>
<dbReference type="HOGENOM" id="CLU_038782_1_0_9"/>
<dbReference type="UniPathway" id="UPA00343"/>
<dbReference type="UniPathway" id="UPA00544"/>
<dbReference type="Proteomes" id="UP000000555">
    <property type="component" value="Chromosome"/>
</dbReference>
<dbReference type="GO" id="GO:0005524">
    <property type="term" value="F:ATP binding"/>
    <property type="evidence" value="ECO:0007669"/>
    <property type="project" value="UniProtKB-UniRule"/>
</dbReference>
<dbReference type="GO" id="GO:0016301">
    <property type="term" value="F:kinase activity"/>
    <property type="evidence" value="ECO:0007669"/>
    <property type="project" value="UniProtKB-KW"/>
</dbReference>
<dbReference type="GO" id="GO:0016773">
    <property type="term" value="F:phosphotransferase activity, alcohol group as acceptor"/>
    <property type="evidence" value="ECO:0007669"/>
    <property type="project" value="UniProtKB-UniRule"/>
</dbReference>
<dbReference type="GO" id="GO:0097175">
    <property type="term" value="P:1,6-anhydro-N-acetyl-beta-muramic acid catabolic process"/>
    <property type="evidence" value="ECO:0007669"/>
    <property type="project" value="UniProtKB-UniRule"/>
</dbReference>
<dbReference type="GO" id="GO:0006040">
    <property type="term" value="P:amino sugar metabolic process"/>
    <property type="evidence" value="ECO:0007669"/>
    <property type="project" value="InterPro"/>
</dbReference>
<dbReference type="GO" id="GO:0009254">
    <property type="term" value="P:peptidoglycan turnover"/>
    <property type="evidence" value="ECO:0007669"/>
    <property type="project" value="UniProtKB-UniRule"/>
</dbReference>
<dbReference type="CDD" id="cd24050">
    <property type="entry name" value="ASKHA_NBD_ANMK"/>
    <property type="match status" value="1"/>
</dbReference>
<dbReference type="Gene3D" id="3.30.420.40">
    <property type="match status" value="2"/>
</dbReference>
<dbReference type="HAMAP" id="MF_01270">
    <property type="entry name" value="AnhMurNAc_kinase"/>
    <property type="match status" value="1"/>
</dbReference>
<dbReference type="InterPro" id="IPR005338">
    <property type="entry name" value="Anhydro_N_Ac-Mur_kinase"/>
</dbReference>
<dbReference type="InterPro" id="IPR043129">
    <property type="entry name" value="ATPase_NBD"/>
</dbReference>
<dbReference type="NCBIfam" id="NF007142">
    <property type="entry name" value="PRK09585.2-1"/>
    <property type="match status" value="1"/>
</dbReference>
<dbReference type="NCBIfam" id="NF007148">
    <property type="entry name" value="PRK09585.3-2"/>
    <property type="match status" value="1"/>
</dbReference>
<dbReference type="NCBIfam" id="NF007151">
    <property type="entry name" value="PRK09585.3-6"/>
    <property type="match status" value="1"/>
</dbReference>
<dbReference type="PANTHER" id="PTHR30605">
    <property type="entry name" value="ANHYDRO-N-ACETYLMURAMIC ACID KINASE"/>
    <property type="match status" value="1"/>
</dbReference>
<dbReference type="PANTHER" id="PTHR30605:SF0">
    <property type="entry name" value="ANHYDRO-N-ACETYLMURAMIC ACID KINASE"/>
    <property type="match status" value="1"/>
</dbReference>
<dbReference type="Pfam" id="PF03702">
    <property type="entry name" value="AnmK"/>
    <property type="match status" value="1"/>
</dbReference>
<dbReference type="SUPFAM" id="SSF53067">
    <property type="entry name" value="Actin-like ATPase domain"/>
    <property type="match status" value="1"/>
</dbReference>
<comment type="function">
    <text evidence="1">Catalyzes the specific phosphorylation of 1,6-anhydro-N-acetylmuramic acid (anhMurNAc) with the simultaneous cleavage of the 1,6-anhydro ring, generating MurNAc-6-P. Is required for the utilization of anhMurNAc either imported from the medium or derived from its own cell wall murein, and thus plays a role in cell wall recycling.</text>
</comment>
<comment type="catalytic activity">
    <reaction evidence="1">
        <text>1,6-anhydro-N-acetyl-beta-muramate + ATP + H2O = N-acetyl-D-muramate 6-phosphate + ADP + H(+)</text>
        <dbReference type="Rhea" id="RHEA:24952"/>
        <dbReference type="ChEBI" id="CHEBI:15377"/>
        <dbReference type="ChEBI" id="CHEBI:15378"/>
        <dbReference type="ChEBI" id="CHEBI:30616"/>
        <dbReference type="ChEBI" id="CHEBI:58690"/>
        <dbReference type="ChEBI" id="CHEBI:58722"/>
        <dbReference type="ChEBI" id="CHEBI:456216"/>
        <dbReference type="EC" id="2.7.1.170"/>
    </reaction>
</comment>
<comment type="pathway">
    <text evidence="1">Amino-sugar metabolism; 1,6-anhydro-N-acetylmuramate degradation.</text>
</comment>
<comment type="pathway">
    <text evidence="1">Cell wall biogenesis; peptidoglycan recycling.</text>
</comment>
<comment type="similarity">
    <text evidence="1">Belongs to the anhydro-N-acetylmuramic acid kinase family.</text>
</comment>
<name>ANMK_CALS4</name>
<reference key="1">
    <citation type="journal article" date="2002" name="Genome Res.">
        <title>A complete sequence of the T. tengcongensis genome.</title>
        <authorList>
            <person name="Bao Q."/>
            <person name="Tian Y."/>
            <person name="Li W."/>
            <person name="Xu Z."/>
            <person name="Xuan Z."/>
            <person name="Hu S."/>
            <person name="Dong W."/>
            <person name="Yang J."/>
            <person name="Chen Y."/>
            <person name="Xue Y."/>
            <person name="Xu Y."/>
            <person name="Lai X."/>
            <person name="Huang L."/>
            <person name="Dong X."/>
            <person name="Ma Y."/>
            <person name="Ling L."/>
            <person name="Tan H."/>
            <person name="Chen R."/>
            <person name="Wang J."/>
            <person name="Yu J."/>
            <person name="Yang H."/>
        </authorList>
    </citation>
    <scope>NUCLEOTIDE SEQUENCE [LARGE SCALE GENOMIC DNA]</scope>
    <source>
        <strain>DSM 15242 / JCM 11007 / NBRC 100824 / MB4</strain>
    </source>
</reference>
<evidence type="ECO:0000255" key="1">
    <source>
        <dbReference type="HAMAP-Rule" id="MF_01270"/>
    </source>
</evidence>
<proteinExistence type="inferred from homology"/>